<protein>
    <recommendedName>
        <fullName evidence="1">Matrix protein 2</fullName>
    </recommendedName>
    <alternativeName>
        <fullName evidence="1">Proton channel protein M2</fullName>
    </alternativeName>
</protein>
<gene>
    <name evidence="1" type="primary">M</name>
</gene>
<keyword id="KW-0025">Alternative splicing</keyword>
<keyword id="KW-1015">Disulfide bond</keyword>
<keyword id="KW-1032">Host cell membrane</keyword>
<keyword id="KW-1043">Host membrane</keyword>
<keyword id="KW-0945">Host-virus interaction</keyword>
<keyword id="KW-0375">Hydrogen ion transport</keyword>
<keyword id="KW-1083">Inhibition of host autophagy by virus</keyword>
<keyword id="KW-0407">Ion channel</keyword>
<keyword id="KW-0406">Ion transport</keyword>
<keyword id="KW-0449">Lipoprotein</keyword>
<keyword id="KW-0472">Membrane</keyword>
<keyword id="KW-0564">Palmitate</keyword>
<keyword id="KW-0597">Phosphoprotein</keyword>
<keyword id="KW-0735">Signal-anchor</keyword>
<keyword id="KW-0812">Transmembrane</keyword>
<keyword id="KW-1133">Transmembrane helix</keyword>
<keyword id="KW-0813">Transport</keyword>
<keyword id="KW-1182">Viral ion channel</keyword>
<keyword id="KW-0946">Virion</keyword>
<proteinExistence type="inferred from homology"/>
<sequence length="97" mass="11158">MSLLTEVETPTRNGWECKCSDSSDPLVIAASIIGILHLILWILDRLFFKCIYRRIKYGLKRGPSTEGVPESMREEYRQEQQSAVDVDDGHFVNIELE</sequence>
<feature type="chain" id="PRO_0000326344" description="Matrix protein 2">
    <location>
        <begin position="1"/>
        <end position="97"/>
    </location>
</feature>
<feature type="topological domain" description="Virion surface" evidence="1">
    <location>
        <begin position="1"/>
        <end position="22"/>
    </location>
</feature>
<feature type="transmembrane region" description="Helical; Signal-anchor for type III membrane protein" evidence="1">
    <location>
        <begin position="23"/>
        <end position="43"/>
    </location>
</feature>
<feature type="topological domain" description="Intravirion" evidence="1">
    <location>
        <begin position="44"/>
        <end position="97"/>
    </location>
</feature>
<feature type="region of interest" description="Disordered" evidence="2">
    <location>
        <begin position="60"/>
        <end position="83"/>
    </location>
</feature>
<feature type="site" description="Essential for channel activity, possibly by being protonated during channel activation, and by forming the channel gate and the selective filter" evidence="1">
    <location>
        <position position="37"/>
    </location>
</feature>
<feature type="site" description="Seems to be involved in pH gating" evidence="1">
    <location>
        <position position="41"/>
    </location>
</feature>
<feature type="modified residue" description="Phosphoserine; by host" evidence="1">
    <location>
        <position position="64"/>
    </location>
</feature>
<feature type="modified residue" description="Phosphoserine; by host" evidence="1">
    <location>
        <position position="82"/>
    </location>
</feature>
<feature type="lipid moiety-binding region" description="S-palmitoyl cysteine; by host" evidence="1">
    <location>
        <position position="50"/>
    </location>
</feature>
<feature type="disulfide bond" description="Interchain (with C-17)" evidence="1">
    <location>
        <position position="17"/>
    </location>
</feature>
<feature type="disulfide bond" description="Interchain (with C-19)" evidence="1">
    <location>
        <position position="19"/>
    </location>
</feature>
<feature type="sequence conflict" description="In Ref. 1; AAY52575." ref="1">
    <original>E</original>
    <variation>K</variation>
    <location>
        <position position="97"/>
    </location>
</feature>
<dbReference type="EMBL" id="DQ067438">
    <property type="protein sequence ID" value="AAY52575.1"/>
    <property type="molecule type" value="Genomic_RNA"/>
</dbReference>
<dbReference type="EMBL" id="CY014664">
    <property type="protein sequence ID" value="ABI84525.1"/>
    <property type="molecule type" value="Genomic_RNA"/>
</dbReference>
<dbReference type="SMR" id="Q0A458"/>
<dbReference type="Proteomes" id="UP000115522">
    <property type="component" value="Genome"/>
</dbReference>
<dbReference type="GO" id="GO:0020002">
    <property type="term" value="C:host cell plasma membrane"/>
    <property type="evidence" value="ECO:0007669"/>
    <property type="project" value="UniProtKB-SubCell"/>
</dbReference>
<dbReference type="GO" id="GO:0016020">
    <property type="term" value="C:membrane"/>
    <property type="evidence" value="ECO:0007669"/>
    <property type="project" value="UniProtKB-UniRule"/>
</dbReference>
<dbReference type="GO" id="GO:0055036">
    <property type="term" value="C:virion membrane"/>
    <property type="evidence" value="ECO:0007669"/>
    <property type="project" value="UniProtKB-SubCell"/>
</dbReference>
<dbReference type="GO" id="GO:0005216">
    <property type="term" value="F:monoatomic ion channel activity"/>
    <property type="evidence" value="ECO:0007669"/>
    <property type="project" value="UniProtKB-UniRule"/>
</dbReference>
<dbReference type="GO" id="GO:0015078">
    <property type="term" value="F:proton transmembrane transporter activity"/>
    <property type="evidence" value="ECO:0007669"/>
    <property type="project" value="UniProtKB-UniRule"/>
</dbReference>
<dbReference type="GO" id="GO:0051259">
    <property type="term" value="P:protein complex oligomerization"/>
    <property type="evidence" value="ECO:0007669"/>
    <property type="project" value="UniProtKB-UniRule"/>
</dbReference>
<dbReference type="GO" id="GO:0044694">
    <property type="term" value="P:symbiont genome entry into host cell via pore formation in plasma membrane"/>
    <property type="evidence" value="ECO:0007669"/>
    <property type="project" value="UniProtKB-UniRule"/>
</dbReference>
<dbReference type="GO" id="GO:0140321">
    <property type="term" value="P:symbiont-mediated suppression of host autophagy"/>
    <property type="evidence" value="ECO:0007669"/>
    <property type="project" value="UniProtKB-KW"/>
</dbReference>
<dbReference type="Gene3D" id="6.10.250.1640">
    <property type="match status" value="1"/>
</dbReference>
<dbReference type="HAMAP" id="MF_04069">
    <property type="entry name" value="INFV_M2"/>
    <property type="match status" value="1"/>
</dbReference>
<dbReference type="InterPro" id="IPR002089">
    <property type="entry name" value="Flu_M2"/>
</dbReference>
<dbReference type="Pfam" id="PF00599">
    <property type="entry name" value="Flu_M2"/>
    <property type="match status" value="1"/>
</dbReference>
<comment type="function">
    <text evidence="1">Forms a proton-selective ion channel that is necessary for the efficient release of the viral genome during virus entry. After attaching to the cell surface, the virion enters the cell by endocytosis. Acidification of the endosome triggers M2 ion channel activity. The influx of protons into virion interior is believed to disrupt interactions between the viral ribonucleoprotein (RNP), matrix protein 1 (M1), and lipid bilayers, thereby freeing the viral genome from interaction with viral proteins and enabling RNA segments to migrate to the host cell nucleus, where influenza virus RNA transcription and replication occur. Also plays a role in viral proteins secretory pathway. Elevates the intravesicular pH of normally acidic compartments, such as trans-Golgi network, preventing newly formed hemagglutinin from premature switching to the fusion-active conformation.</text>
</comment>
<comment type="activity regulation">
    <text>The M2 protein from most influenza A strains is inhibited by amantadine and rimantadine, resulting in viral uncoating incapacity. Emergence of amantadine-resistant variants is usually rapid.</text>
</comment>
<comment type="subunit">
    <text evidence="1">Homotetramer; composed of two disulfide-linked dimers held together by non-covalent interactions. May interact with matrix protein 1.</text>
</comment>
<comment type="subcellular location">
    <subcellularLocation>
        <location evidence="1">Virion membrane</location>
    </subcellularLocation>
    <subcellularLocation>
        <location evidence="1">Host apical cell membrane</location>
        <topology evidence="1">Single-pass type III membrane protein</topology>
    </subcellularLocation>
    <text evidence="1">Abundantly expressed at the apical plasma membrane in infected polarized epithelial cells, in close proximity to budding and assembled virions. Minor component of virions (only 16-20 molecules/virion).</text>
</comment>
<comment type="alternative products">
    <event type="alternative splicing"/>
    <isoform>
        <id>Q0A458-1</id>
        <name>M2</name>
        <sequence type="displayed"/>
    </isoform>
    <isoform>
        <id>Q0A457-1</id>
        <name>M1</name>
        <sequence type="external"/>
    </isoform>
    <text>Only the first 9 residues are shared by the 2 isoforms.</text>
</comment>
<comment type="domain">
    <text evidence="1">Cytoplasmic tail plays an important role in virion assembly and morphogenesis.</text>
</comment>
<comment type="miscellaneous">
    <text evidence="1">When the channel is activated, one or more imidazole moieties of His-37 probably become bi-protonated.</text>
</comment>
<comment type="similarity">
    <text evidence="1">Belongs to the influenza viruses matrix protein M2 family.</text>
</comment>
<evidence type="ECO:0000255" key="1">
    <source>
        <dbReference type="HAMAP-Rule" id="MF_04069"/>
    </source>
</evidence>
<evidence type="ECO:0000256" key="2">
    <source>
        <dbReference type="SAM" id="MobiDB-lite"/>
    </source>
</evidence>
<organism>
    <name type="scientific">Influenza A virus (strain A/Turkey/Wisconsin/1/1966 H9N2)</name>
    <dbReference type="NCBI Taxonomy" id="385620"/>
    <lineage>
        <taxon>Viruses</taxon>
        <taxon>Riboviria</taxon>
        <taxon>Orthornavirae</taxon>
        <taxon>Negarnaviricota</taxon>
        <taxon>Polyploviricotina</taxon>
        <taxon>Insthoviricetes</taxon>
        <taxon>Articulavirales</taxon>
        <taxon>Orthomyxoviridae</taxon>
        <taxon>Alphainfluenzavirus</taxon>
        <taxon>Alphainfluenzavirus influenzae</taxon>
        <taxon>Influenza A virus</taxon>
    </lineage>
</organism>
<organismHost>
    <name type="scientific">Aves</name>
    <dbReference type="NCBI Taxonomy" id="8782"/>
</organismHost>
<reference key="1">
    <citation type="journal article" date="2005" name="Virology">
        <title>Evolution of H9N2 influenza viruses from domestic poultry in Mainland China.</title>
        <authorList>
            <person name="Li C."/>
            <person name="Yu K."/>
            <person name="Tian G."/>
            <person name="Yu D."/>
            <person name="Liu L."/>
            <person name="Jing B."/>
            <person name="Ping J."/>
            <person name="Chen H."/>
        </authorList>
    </citation>
    <scope>NUCLEOTIDE SEQUENCE [GENOMIC RNA]</scope>
</reference>
<reference key="2">
    <citation type="journal article" date="2006" name="Science">
        <title>Large-scale sequence analysis of avian influenza isolates.</title>
        <authorList>
            <person name="Obenauer J.C."/>
            <person name="Denson J."/>
            <person name="Mehta P.K."/>
            <person name="Su X."/>
            <person name="Mukatira S."/>
            <person name="Finkelstein D.B."/>
            <person name="Xu X."/>
            <person name="Wang J."/>
            <person name="Ma J."/>
            <person name="Fan Y."/>
            <person name="Rakestraw K.M."/>
            <person name="Webster R.G."/>
            <person name="Hoffmann E."/>
            <person name="Krauss S."/>
            <person name="Zheng J."/>
            <person name="Zhang Z."/>
            <person name="Naeve C.W."/>
        </authorList>
    </citation>
    <scope>NUCLEOTIDE SEQUENCE [GENOMIC RNA]</scope>
</reference>
<accession>Q0A458</accession>
<accession>Q3SBF5</accession>
<name>M2_I66A1</name>